<evidence type="ECO:0000255" key="1">
    <source>
        <dbReference type="HAMAP-Rule" id="MF_00394"/>
    </source>
</evidence>
<proteinExistence type="inferred from homology"/>
<accession>A1RQ92</accession>
<name>GPDA_SHESW</name>
<sequence>MKNSADITVLGAGSYGTALAISLASNGHKTLLWGHDPVHMQTLAQDKCNQAFLPDIAFPDCLQIEADLAKALAASNNVLVVVPSHVFGTVLEQAKPLLRSDARIVWATKGLEPETGRLLQDVARDVLGEQYPLAVLSGPTFAKELAMGLPTAISVAGTCPQFTEDLVELLHSPKRLRVYANDDFTGLQLGGAVKNVIAIGAGMSDGIGFGANARTALITRGLVELTRLGEALGASTATFMGMAGLGDLVLTCTDNQSRNRRFGLALGKGCDVMTAQAEIGQVVEGYRNTKEVFTLAKRLGVEMPITEQIYQVLYQGKSPVDAAKELLGREKKSETPTQ</sequence>
<gene>
    <name evidence="1" type="primary">gpsA</name>
    <name type="ordered locus">Sputw3181_4035</name>
</gene>
<reference key="1">
    <citation type="submission" date="2006-12" db="EMBL/GenBank/DDBJ databases">
        <title>Complete sequence of Shewanella sp. W3-18-1.</title>
        <authorList>
            <consortium name="US DOE Joint Genome Institute"/>
            <person name="Copeland A."/>
            <person name="Lucas S."/>
            <person name="Lapidus A."/>
            <person name="Barry K."/>
            <person name="Detter J.C."/>
            <person name="Glavina del Rio T."/>
            <person name="Hammon N."/>
            <person name="Israni S."/>
            <person name="Dalin E."/>
            <person name="Tice H."/>
            <person name="Pitluck S."/>
            <person name="Chain P."/>
            <person name="Malfatti S."/>
            <person name="Shin M."/>
            <person name="Vergez L."/>
            <person name="Schmutz J."/>
            <person name="Larimer F."/>
            <person name="Land M."/>
            <person name="Hauser L."/>
            <person name="Kyrpides N."/>
            <person name="Lykidis A."/>
            <person name="Tiedje J."/>
            <person name="Richardson P."/>
        </authorList>
    </citation>
    <scope>NUCLEOTIDE SEQUENCE [LARGE SCALE GENOMIC DNA]</scope>
    <source>
        <strain>W3-18-1</strain>
    </source>
</reference>
<keyword id="KW-0963">Cytoplasm</keyword>
<keyword id="KW-0444">Lipid biosynthesis</keyword>
<keyword id="KW-0443">Lipid metabolism</keyword>
<keyword id="KW-0520">NAD</keyword>
<keyword id="KW-0521">NADP</keyword>
<keyword id="KW-0547">Nucleotide-binding</keyword>
<keyword id="KW-0560">Oxidoreductase</keyword>
<keyword id="KW-0594">Phospholipid biosynthesis</keyword>
<keyword id="KW-1208">Phospholipid metabolism</keyword>
<comment type="function">
    <text evidence="1">Catalyzes the reduction of the glycolytic intermediate dihydroxyacetone phosphate (DHAP) to sn-glycerol 3-phosphate (G3P), the key precursor for phospholipid synthesis.</text>
</comment>
<comment type="catalytic activity">
    <reaction evidence="1">
        <text>sn-glycerol 3-phosphate + NAD(+) = dihydroxyacetone phosphate + NADH + H(+)</text>
        <dbReference type="Rhea" id="RHEA:11092"/>
        <dbReference type="ChEBI" id="CHEBI:15378"/>
        <dbReference type="ChEBI" id="CHEBI:57540"/>
        <dbReference type="ChEBI" id="CHEBI:57597"/>
        <dbReference type="ChEBI" id="CHEBI:57642"/>
        <dbReference type="ChEBI" id="CHEBI:57945"/>
        <dbReference type="EC" id="1.1.1.94"/>
    </reaction>
    <physiologicalReaction direction="right-to-left" evidence="1">
        <dbReference type="Rhea" id="RHEA:11094"/>
    </physiologicalReaction>
</comment>
<comment type="catalytic activity">
    <reaction evidence="1">
        <text>sn-glycerol 3-phosphate + NADP(+) = dihydroxyacetone phosphate + NADPH + H(+)</text>
        <dbReference type="Rhea" id="RHEA:11096"/>
        <dbReference type="ChEBI" id="CHEBI:15378"/>
        <dbReference type="ChEBI" id="CHEBI:57597"/>
        <dbReference type="ChEBI" id="CHEBI:57642"/>
        <dbReference type="ChEBI" id="CHEBI:57783"/>
        <dbReference type="ChEBI" id="CHEBI:58349"/>
        <dbReference type="EC" id="1.1.1.94"/>
    </reaction>
    <physiologicalReaction direction="right-to-left" evidence="1">
        <dbReference type="Rhea" id="RHEA:11098"/>
    </physiologicalReaction>
</comment>
<comment type="pathway">
    <text evidence="1">Membrane lipid metabolism; glycerophospholipid metabolism.</text>
</comment>
<comment type="subcellular location">
    <subcellularLocation>
        <location evidence="1">Cytoplasm</location>
    </subcellularLocation>
</comment>
<comment type="similarity">
    <text evidence="1">Belongs to the NAD-dependent glycerol-3-phosphate dehydrogenase family.</text>
</comment>
<organism>
    <name type="scientific">Shewanella sp. (strain W3-18-1)</name>
    <dbReference type="NCBI Taxonomy" id="351745"/>
    <lineage>
        <taxon>Bacteria</taxon>
        <taxon>Pseudomonadati</taxon>
        <taxon>Pseudomonadota</taxon>
        <taxon>Gammaproteobacteria</taxon>
        <taxon>Alteromonadales</taxon>
        <taxon>Shewanellaceae</taxon>
        <taxon>Shewanella</taxon>
    </lineage>
</organism>
<dbReference type="EC" id="1.1.1.94" evidence="1"/>
<dbReference type="EMBL" id="CP000503">
    <property type="protein sequence ID" value="ABM26837.1"/>
    <property type="molecule type" value="Genomic_DNA"/>
</dbReference>
<dbReference type="RefSeq" id="WP_011791258.1">
    <property type="nucleotide sequence ID" value="NC_008750.1"/>
</dbReference>
<dbReference type="SMR" id="A1RQ92"/>
<dbReference type="GeneID" id="67445439"/>
<dbReference type="KEGG" id="shw:Sputw3181_4035"/>
<dbReference type="HOGENOM" id="CLU_033449_0_2_6"/>
<dbReference type="UniPathway" id="UPA00940"/>
<dbReference type="Proteomes" id="UP000002597">
    <property type="component" value="Chromosome"/>
</dbReference>
<dbReference type="GO" id="GO:0005829">
    <property type="term" value="C:cytosol"/>
    <property type="evidence" value="ECO:0007669"/>
    <property type="project" value="TreeGrafter"/>
</dbReference>
<dbReference type="GO" id="GO:0047952">
    <property type="term" value="F:glycerol-3-phosphate dehydrogenase [NAD(P)+] activity"/>
    <property type="evidence" value="ECO:0007669"/>
    <property type="project" value="UniProtKB-UniRule"/>
</dbReference>
<dbReference type="GO" id="GO:0051287">
    <property type="term" value="F:NAD binding"/>
    <property type="evidence" value="ECO:0007669"/>
    <property type="project" value="InterPro"/>
</dbReference>
<dbReference type="GO" id="GO:0005975">
    <property type="term" value="P:carbohydrate metabolic process"/>
    <property type="evidence" value="ECO:0007669"/>
    <property type="project" value="InterPro"/>
</dbReference>
<dbReference type="GO" id="GO:0046167">
    <property type="term" value="P:glycerol-3-phosphate biosynthetic process"/>
    <property type="evidence" value="ECO:0007669"/>
    <property type="project" value="UniProtKB-UniRule"/>
</dbReference>
<dbReference type="GO" id="GO:0046168">
    <property type="term" value="P:glycerol-3-phosphate catabolic process"/>
    <property type="evidence" value="ECO:0007669"/>
    <property type="project" value="InterPro"/>
</dbReference>
<dbReference type="GO" id="GO:0046474">
    <property type="term" value="P:glycerophospholipid biosynthetic process"/>
    <property type="evidence" value="ECO:0007669"/>
    <property type="project" value="TreeGrafter"/>
</dbReference>
<dbReference type="FunFam" id="1.10.1040.10:FF:000001">
    <property type="entry name" value="Glycerol-3-phosphate dehydrogenase [NAD(P)+]"/>
    <property type="match status" value="1"/>
</dbReference>
<dbReference type="FunFam" id="3.40.50.720:FF:000019">
    <property type="entry name" value="Glycerol-3-phosphate dehydrogenase [NAD(P)+]"/>
    <property type="match status" value="1"/>
</dbReference>
<dbReference type="Gene3D" id="1.10.1040.10">
    <property type="entry name" value="N-(1-d-carboxylethyl)-l-norvaline Dehydrogenase, domain 2"/>
    <property type="match status" value="1"/>
</dbReference>
<dbReference type="Gene3D" id="3.40.50.720">
    <property type="entry name" value="NAD(P)-binding Rossmann-like Domain"/>
    <property type="match status" value="1"/>
</dbReference>
<dbReference type="HAMAP" id="MF_00394">
    <property type="entry name" value="NAD_Glyc3P_dehydrog"/>
    <property type="match status" value="1"/>
</dbReference>
<dbReference type="InterPro" id="IPR008927">
    <property type="entry name" value="6-PGluconate_DH-like_C_sf"/>
</dbReference>
<dbReference type="InterPro" id="IPR013328">
    <property type="entry name" value="6PGD_dom2"/>
</dbReference>
<dbReference type="InterPro" id="IPR006168">
    <property type="entry name" value="G3P_DH_NAD-dep"/>
</dbReference>
<dbReference type="InterPro" id="IPR006109">
    <property type="entry name" value="G3P_DH_NAD-dep_C"/>
</dbReference>
<dbReference type="InterPro" id="IPR011128">
    <property type="entry name" value="G3P_DH_NAD-dep_N"/>
</dbReference>
<dbReference type="InterPro" id="IPR036291">
    <property type="entry name" value="NAD(P)-bd_dom_sf"/>
</dbReference>
<dbReference type="NCBIfam" id="NF000939">
    <property type="entry name" value="PRK00094.1-1"/>
    <property type="match status" value="1"/>
</dbReference>
<dbReference type="NCBIfam" id="NF000940">
    <property type="entry name" value="PRK00094.1-2"/>
    <property type="match status" value="1"/>
</dbReference>
<dbReference type="NCBIfam" id="NF000942">
    <property type="entry name" value="PRK00094.1-4"/>
    <property type="match status" value="1"/>
</dbReference>
<dbReference type="PANTHER" id="PTHR11728">
    <property type="entry name" value="GLYCEROL-3-PHOSPHATE DEHYDROGENASE"/>
    <property type="match status" value="1"/>
</dbReference>
<dbReference type="PANTHER" id="PTHR11728:SF1">
    <property type="entry name" value="GLYCEROL-3-PHOSPHATE DEHYDROGENASE [NAD(+)] 2, CHLOROPLASTIC"/>
    <property type="match status" value="1"/>
</dbReference>
<dbReference type="Pfam" id="PF07479">
    <property type="entry name" value="NAD_Gly3P_dh_C"/>
    <property type="match status" value="1"/>
</dbReference>
<dbReference type="Pfam" id="PF01210">
    <property type="entry name" value="NAD_Gly3P_dh_N"/>
    <property type="match status" value="1"/>
</dbReference>
<dbReference type="PIRSF" id="PIRSF000114">
    <property type="entry name" value="Glycerol-3-P_dh"/>
    <property type="match status" value="1"/>
</dbReference>
<dbReference type="PRINTS" id="PR00077">
    <property type="entry name" value="GPDHDRGNASE"/>
</dbReference>
<dbReference type="SUPFAM" id="SSF48179">
    <property type="entry name" value="6-phosphogluconate dehydrogenase C-terminal domain-like"/>
    <property type="match status" value="1"/>
</dbReference>
<dbReference type="SUPFAM" id="SSF51735">
    <property type="entry name" value="NAD(P)-binding Rossmann-fold domains"/>
    <property type="match status" value="1"/>
</dbReference>
<dbReference type="PROSITE" id="PS00957">
    <property type="entry name" value="NAD_G3PDH"/>
    <property type="match status" value="1"/>
</dbReference>
<feature type="chain" id="PRO_1000049556" description="Glycerol-3-phosphate dehydrogenase [NAD(P)+]">
    <location>
        <begin position="1"/>
        <end position="338"/>
    </location>
</feature>
<feature type="active site" description="Proton acceptor" evidence="1">
    <location>
        <position position="194"/>
    </location>
</feature>
<feature type="binding site" evidence="1">
    <location>
        <position position="14"/>
    </location>
    <ligand>
        <name>NADPH</name>
        <dbReference type="ChEBI" id="CHEBI:57783"/>
    </ligand>
</feature>
<feature type="binding site" evidence="1">
    <location>
        <position position="15"/>
    </location>
    <ligand>
        <name>NADPH</name>
        <dbReference type="ChEBI" id="CHEBI:57783"/>
    </ligand>
</feature>
<feature type="binding site" evidence="1">
    <location>
        <position position="35"/>
    </location>
    <ligand>
        <name>NADPH</name>
        <dbReference type="ChEBI" id="CHEBI:57783"/>
    </ligand>
</feature>
<feature type="binding site" evidence="1">
    <location>
        <position position="109"/>
    </location>
    <ligand>
        <name>NADPH</name>
        <dbReference type="ChEBI" id="CHEBI:57783"/>
    </ligand>
</feature>
<feature type="binding site" evidence="1">
    <location>
        <position position="109"/>
    </location>
    <ligand>
        <name>sn-glycerol 3-phosphate</name>
        <dbReference type="ChEBI" id="CHEBI:57597"/>
    </ligand>
</feature>
<feature type="binding site" evidence="1">
    <location>
        <position position="138"/>
    </location>
    <ligand>
        <name>sn-glycerol 3-phosphate</name>
        <dbReference type="ChEBI" id="CHEBI:57597"/>
    </ligand>
</feature>
<feature type="binding site" evidence="1">
    <location>
        <position position="140"/>
    </location>
    <ligand>
        <name>sn-glycerol 3-phosphate</name>
        <dbReference type="ChEBI" id="CHEBI:57597"/>
    </ligand>
</feature>
<feature type="binding site" evidence="1">
    <location>
        <position position="142"/>
    </location>
    <ligand>
        <name>NADPH</name>
        <dbReference type="ChEBI" id="CHEBI:57783"/>
    </ligand>
</feature>
<feature type="binding site" evidence="1">
    <location>
        <position position="194"/>
    </location>
    <ligand>
        <name>sn-glycerol 3-phosphate</name>
        <dbReference type="ChEBI" id="CHEBI:57597"/>
    </ligand>
</feature>
<feature type="binding site" evidence="1">
    <location>
        <position position="247"/>
    </location>
    <ligand>
        <name>sn-glycerol 3-phosphate</name>
        <dbReference type="ChEBI" id="CHEBI:57597"/>
    </ligand>
</feature>
<feature type="binding site" evidence="1">
    <location>
        <position position="257"/>
    </location>
    <ligand>
        <name>sn-glycerol 3-phosphate</name>
        <dbReference type="ChEBI" id="CHEBI:57597"/>
    </ligand>
</feature>
<feature type="binding site" evidence="1">
    <location>
        <position position="258"/>
    </location>
    <ligand>
        <name>NADPH</name>
        <dbReference type="ChEBI" id="CHEBI:57783"/>
    </ligand>
</feature>
<feature type="binding site" evidence="1">
    <location>
        <position position="258"/>
    </location>
    <ligand>
        <name>sn-glycerol 3-phosphate</name>
        <dbReference type="ChEBI" id="CHEBI:57597"/>
    </ligand>
</feature>
<feature type="binding site" evidence="1">
    <location>
        <position position="259"/>
    </location>
    <ligand>
        <name>sn-glycerol 3-phosphate</name>
        <dbReference type="ChEBI" id="CHEBI:57597"/>
    </ligand>
</feature>
<feature type="binding site" evidence="1">
    <location>
        <position position="282"/>
    </location>
    <ligand>
        <name>NADPH</name>
        <dbReference type="ChEBI" id="CHEBI:57783"/>
    </ligand>
</feature>
<feature type="binding site" evidence="1">
    <location>
        <position position="284"/>
    </location>
    <ligand>
        <name>NADPH</name>
        <dbReference type="ChEBI" id="CHEBI:57783"/>
    </ligand>
</feature>
<protein>
    <recommendedName>
        <fullName evidence="1">Glycerol-3-phosphate dehydrogenase [NAD(P)+]</fullName>
        <ecNumber evidence="1">1.1.1.94</ecNumber>
    </recommendedName>
    <alternativeName>
        <fullName evidence="1">NAD(P)(+)-dependent glycerol-3-phosphate dehydrogenase</fullName>
    </alternativeName>
    <alternativeName>
        <fullName evidence="1">NAD(P)H-dependent dihydroxyacetone-phosphate reductase</fullName>
    </alternativeName>
</protein>